<organism>
    <name type="scientific">Arabidopsis thaliana</name>
    <name type="common">Mouse-ear cress</name>
    <dbReference type="NCBI Taxonomy" id="3702"/>
    <lineage>
        <taxon>Eukaryota</taxon>
        <taxon>Viridiplantae</taxon>
        <taxon>Streptophyta</taxon>
        <taxon>Embryophyta</taxon>
        <taxon>Tracheophyta</taxon>
        <taxon>Spermatophyta</taxon>
        <taxon>Magnoliopsida</taxon>
        <taxon>eudicotyledons</taxon>
        <taxon>Gunneridae</taxon>
        <taxon>Pentapetalae</taxon>
        <taxon>rosids</taxon>
        <taxon>malvids</taxon>
        <taxon>Brassicales</taxon>
        <taxon>Brassicaceae</taxon>
        <taxon>Camelineae</taxon>
        <taxon>Arabidopsis</taxon>
    </lineage>
</organism>
<dbReference type="EMBL" id="AL391716">
    <property type="status" value="NOT_ANNOTATED_CDS"/>
    <property type="molecule type" value="Genomic_DNA"/>
</dbReference>
<dbReference type="EMBL" id="CP002688">
    <property type="protein sequence ID" value="AED90723.1"/>
    <property type="molecule type" value="Genomic_DNA"/>
</dbReference>
<dbReference type="EMBL" id="AY092975">
    <property type="protein sequence ID" value="AAM12974.1"/>
    <property type="molecule type" value="mRNA"/>
</dbReference>
<dbReference type="EMBL" id="AY114645">
    <property type="protein sequence ID" value="AAM47964.1"/>
    <property type="molecule type" value="mRNA"/>
</dbReference>
<dbReference type="SMR" id="Q8RWN5"/>
<dbReference type="BioGRID" id="15587">
    <property type="interactions" value="10"/>
</dbReference>
<dbReference type="FunCoup" id="Q8RWN5">
    <property type="interactions" value="817"/>
</dbReference>
<dbReference type="IntAct" id="Q8RWN5">
    <property type="interactions" value="7"/>
</dbReference>
<dbReference type="STRING" id="3702.Q8RWN5"/>
<dbReference type="iPTMnet" id="Q8RWN5"/>
<dbReference type="PaxDb" id="3702-AT5G04280.1"/>
<dbReference type="ProteomicsDB" id="232877"/>
<dbReference type="EnsemblPlants" id="AT5G04280.1">
    <property type="protein sequence ID" value="AT5G04280.1"/>
    <property type="gene ID" value="AT5G04280"/>
</dbReference>
<dbReference type="Gramene" id="AT5G04280.1">
    <property type="protein sequence ID" value="AT5G04280.1"/>
    <property type="gene ID" value="AT5G04280"/>
</dbReference>
<dbReference type="KEGG" id="ath:AT5G04280"/>
<dbReference type="Araport" id="AT5G04280"/>
<dbReference type="TAIR" id="AT5G04280">
    <property type="gene designation" value="RBGB3"/>
</dbReference>
<dbReference type="eggNOG" id="KOG0118">
    <property type="taxonomic scope" value="Eukaryota"/>
</dbReference>
<dbReference type="HOGENOM" id="CLU_012062_28_0_1"/>
<dbReference type="InParanoid" id="Q8RWN5"/>
<dbReference type="OMA" id="VGQDECF"/>
<dbReference type="OrthoDB" id="439808at2759"/>
<dbReference type="PhylomeDB" id="Q8RWN5"/>
<dbReference type="CD-CODE" id="4299E36E">
    <property type="entry name" value="Nucleolus"/>
</dbReference>
<dbReference type="CD-CODE" id="9A8A194B">
    <property type="entry name" value="Nuclear speckle"/>
</dbReference>
<dbReference type="PRO" id="PR:Q8RWN5"/>
<dbReference type="Proteomes" id="UP000006548">
    <property type="component" value="Chromosome 5"/>
</dbReference>
<dbReference type="ExpressionAtlas" id="Q8RWN5">
    <property type="expression patterns" value="baseline and differential"/>
</dbReference>
<dbReference type="GO" id="GO:0005730">
    <property type="term" value="C:nucleolus"/>
    <property type="evidence" value="ECO:0007005"/>
    <property type="project" value="TAIR"/>
</dbReference>
<dbReference type="GO" id="GO:0005634">
    <property type="term" value="C:nucleus"/>
    <property type="evidence" value="ECO:0000314"/>
    <property type="project" value="TAIR"/>
</dbReference>
<dbReference type="GO" id="GO:0005886">
    <property type="term" value="C:plasma membrane"/>
    <property type="evidence" value="ECO:0007005"/>
    <property type="project" value="TAIR"/>
</dbReference>
<dbReference type="GO" id="GO:0003682">
    <property type="term" value="F:chromatin binding"/>
    <property type="evidence" value="ECO:0000314"/>
    <property type="project" value="TAIR"/>
</dbReference>
<dbReference type="GO" id="GO:0031490">
    <property type="term" value="F:chromatin DNA binding"/>
    <property type="evidence" value="ECO:0000314"/>
    <property type="project" value="TAIR"/>
</dbReference>
<dbReference type="GO" id="GO:0003729">
    <property type="term" value="F:mRNA binding"/>
    <property type="evidence" value="ECO:0000314"/>
    <property type="project" value="TAIR"/>
</dbReference>
<dbReference type="GO" id="GO:0003676">
    <property type="term" value="F:nucleic acid binding"/>
    <property type="evidence" value="ECO:0000314"/>
    <property type="project" value="TAIR"/>
</dbReference>
<dbReference type="GO" id="GO:0003723">
    <property type="term" value="F:RNA binding"/>
    <property type="evidence" value="ECO:0000314"/>
    <property type="project" value="TAIR"/>
</dbReference>
<dbReference type="GO" id="GO:0008270">
    <property type="term" value="F:zinc ion binding"/>
    <property type="evidence" value="ECO:0007669"/>
    <property type="project" value="UniProtKB-KW"/>
</dbReference>
<dbReference type="GO" id="GO:0045892">
    <property type="term" value="P:negative regulation of DNA-templated transcription"/>
    <property type="evidence" value="ECO:0000316"/>
    <property type="project" value="TAIR"/>
</dbReference>
<dbReference type="GO" id="GO:0048026">
    <property type="term" value="P:positive regulation of mRNA splicing, via spliceosome"/>
    <property type="evidence" value="ECO:0000316"/>
    <property type="project" value="TAIR"/>
</dbReference>
<dbReference type="GO" id="GO:0009409">
    <property type="term" value="P:response to cold"/>
    <property type="evidence" value="ECO:0000270"/>
    <property type="project" value="TAIR"/>
</dbReference>
<dbReference type="GO" id="GO:0009414">
    <property type="term" value="P:response to water deprivation"/>
    <property type="evidence" value="ECO:0000270"/>
    <property type="project" value="TAIR"/>
</dbReference>
<dbReference type="FunFam" id="3.30.70.330:FF:001295">
    <property type="entry name" value="Glycine-rich RNA-binding protein RZ1B"/>
    <property type="match status" value="1"/>
</dbReference>
<dbReference type="FunFam" id="4.10.60.10:FF:000047">
    <property type="entry name" value="Glycine-rich RNA-binding protein RZ1C"/>
    <property type="match status" value="1"/>
</dbReference>
<dbReference type="Gene3D" id="3.30.70.330">
    <property type="match status" value="1"/>
</dbReference>
<dbReference type="Gene3D" id="4.10.60.10">
    <property type="entry name" value="Zinc finger, CCHC-type"/>
    <property type="match status" value="1"/>
</dbReference>
<dbReference type="InterPro" id="IPR012677">
    <property type="entry name" value="Nucleotide-bd_a/b_plait_sf"/>
</dbReference>
<dbReference type="InterPro" id="IPR035979">
    <property type="entry name" value="RBD_domain_sf"/>
</dbReference>
<dbReference type="InterPro" id="IPR000504">
    <property type="entry name" value="RRM_dom"/>
</dbReference>
<dbReference type="InterPro" id="IPR001878">
    <property type="entry name" value="Znf_CCHC"/>
</dbReference>
<dbReference type="InterPro" id="IPR036875">
    <property type="entry name" value="Znf_CCHC_sf"/>
</dbReference>
<dbReference type="PANTHER" id="PTHR48031:SF2">
    <property type="entry name" value="RNA-BINDING PROTEIN 4"/>
    <property type="match status" value="1"/>
</dbReference>
<dbReference type="PANTHER" id="PTHR48031">
    <property type="entry name" value="SRA STEM-LOOP-INTERACTING RNA-BINDING PROTEIN, MITOCHONDRIAL"/>
    <property type="match status" value="1"/>
</dbReference>
<dbReference type="Pfam" id="PF00076">
    <property type="entry name" value="RRM_1"/>
    <property type="match status" value="1"/>
</dbReference>
<dbReference type="Pfam" id="PF00098">
    <property type="entry name" value="zf-CCHC"/>
    <property type="match status" value="1"/>
</dbReference>
<dbReference type="SMART" id="SM00360">
    <property type="entry name" value="RRM"/>
    <property type="match status" value="1"/>
</dbReference>
<dbReference type="SMART" id="SM00343">
    <property type="entry name" value="ZnF_C2HC"/>
    <property type="match status" value="1"/>
</dbReference>
<dbReference type="SUPFAM" id="SSF57756">
    <property type="entry name" value="Retrovirus zinc finger-like domains"/>
    <property type="match status" value="1"/>
</dbReference>
<dbReference type="SUPFAM" id="SSF54928">
    <property type="entry name" value="RNA-binding domain, RBD"/>
    <property type="match status" value="1"/>
</dbReference>
<dbReference type="PROSITE" id="PS50102">
    <property type="entry name" value="RRM"/>
    <property type="match status" value="1"/>
</dbReference>
<dbReference type="PROSITE" id="PS50158">
    <property type="entry name" value="ZF_CCHC"/>
    <property type="match status" value="1"/>
</dbReference>
<feature type="chain" id="PRO_0000431282" description="Glycine-rich RNA-binding protein RZ1C">
    <location>
        <begin position="1"/>
        <end position="310"/>
    </location>
</feature>
<feature type="domain" description="RRM" evidence="2">
    <location>
        <begin position="7"/>
        <end position="85"/>
    </location>
</feature>
<feature type="zinc finger region" description="CCHC-type" evidence="1">
    <location>
        <begin position="128"/>
        <end position="143"/>
    </location>
</feature>
<feature type="region of interest" description="Disordered" evidence="3">
    <location>
        <begin position="82"/>
        <end position="120"/>
    </location>
</feature>
<feature type="region of interest" description="Disordered" evidence="3">
    <location>
        <begin position="224"/>
        <end position="310"/>
    </location>
</feature>
<feature type="compositionally biased region" description="Basic and acidic residues" evidence="3">
    <location>
        <begin position="83"/>
        <end position="101"/>
    </location>
</feature>
<feature type="compositionally biased region" description="Gly residues" evidence="3">
    <location>
        <begin position="111"/>
        <end position="120"/>
    </location>
</feature>
<feature type="compositionally biased region" description="Basic and acidic residues" evidence="3">
    <location>
        <begin position="226"/>
        <end position="236"/>
    </location>
</feature>
<feature type="compositionally biased region" description="Basic and acidic residues" evidence="3">
    <location>
        <begin position="244"/>
        <end position="253"/>
    </location>
</feature>
<feature type="compositionally biased region" description="Gly residues" evidence="3">
    <location>
        <begin position="261"/>
        <end position="273"/>
    </location>
</feature>
<feature type="modified residue" description="Phosphoserine" evidence="8 9">
    <location>
        <position position="15"/>
    </location>
</feature>
<feature type="modified residue" description="Phosphoserine" evidence="9">
    <location>
        <position position="295"/>
    </location>
</feature>
<gene>
    <name evidence="6" type="primary">RZ1C</name>
    <name evidence="7" type="ordered locus">At5g04280</name>
</gene>
<comment type="function">
    <text evidence="4">Binds RNA and DNA sequences non-specifically. May be involved in tolerance to cold stress.</text>
</comment>
<comment type="subcellular location">
    <subcellularLocation>
        <location evidence="4">Nucleus</location>
    </subcellularLocation>
</comment>
<comment type="tissue specificity">
    <text evidence="4">Expressed in roots, rosette and cauline leaves, stems, floral buds and flowers.</text>
</comment>
<comment type="induction">
    <text evidence="4">By cold stress.</text>
</comment>
<comment type="disruption phenotype">
    <text evidence="4">No visible phenotype under normal growth conditions.</text>
</comment>
<evidence type="ECO:0000255" key="1">
    <source>
        <dbReference type="PROSITE-ProRule" id="PRU00047"/>
    </source>
</evidence>
<evidence type="ECO:0000255" key="2">
    <source>
        <dbReference type="PROSITE-ProRule" id="PRU00176"/>
    </source>
</evidence>
<evidence type="ECO:0000256" key="3">
    <source>
        <dbReference type="SAM" id="MobiDB-lite"/>
    </source>
</evidence>
<evidence type="ECO:0000269" key="4">
    <source>
    </source>
</evidence>
<evidence type="ECO:0000303" key="5">
    <source>
    </source>
</evidence>
<evidence type="ECO:0000305" key="6"/>
<evidence type="ECO:0000312" key="7">
    <source>
        <dbReference type="Araport" id="AT5G04280"/>
    </source>
</evidence>
<evidence type="ECO:0007744" key="8">
    <source>
    </source>
</evidence>
<evidence type="ECO:0007744" key="9">
    <source>
    </source>
</evidence>
<sequence>MAAKEGSRIFVGGLSPEVTDRDLERAFSRFGDILDCQIMLERDTGRSRGFGFITFADRRAMDESIREMHGRDFGDRVISVNRAEPKLGRDDGESHGSRGGRDSGYSIAGKGSFGGGGGGGGRVGEDECFKCGRVGHWARDCPSAGGGRGGPVGGFSSRASAYGGSDGRVDRYADRDRYVDRERYIDDRYDGAARYGARDRFDSREAYIPRDRYASDRYAAPADRFAGGDRYSRGSDRYPPGSYDKARSFERDIAPSAGSDRYGGGRAGGPIRGGGEEGRGFRSRAGAPYERPSRSGGGGAYPSSSTFDRY</sequence>
<accession>Q8RWN5</accession>
<keyword id="KW-0238">DNA-binding</keyword>
<keyword id="KW-0479">Metal-binding</keyword>
<keyword id="KW-0539">Nucleus</keyword>
<keyword id="KW-0597">Phosphoprotein</keyword>
<keyword id="KW-1185">Reference proteome</keyword>
<keyword id="KW-0694">RNA-binding</keyword>
<keyword id="KW-0346">Stress response</keyword>
<keyword id="KW-0862">Zinc</keyword>
<keyword id="KW-0863">Zinc-finger</keyword>
<reference key="1">
    <citation type="journal article" date="2000" name="Nature">
        <title>Sequence and analysis of chromosome 5 of the plant Arabidopsis thaliana.</title>
        <authorList>
            <person name="Tabata S."/>
            <person name="Kaneko T."/>
            <person name="Nakamura Y."/>
            <person name="Kotani H."/>
            <person name="Kato T."/>
            <person name="Asamizu E."/>
            <person name="Miyajima N."/>
            <person name="Sasamoto S."/>
            <person name="Kimura T."/>
            <person name="Hosouchi T."/>
            <person name="Kawashima K."/>
            <person name="Kohara M."/>
            <person name="Matsumoto M."/>
            <person name="Matsuno A."/>
            <person name="Muraki A."/>
            <person name="Nakayama S."/>
            <person name="Nakazaki N."/>
            <person name="Naruo K."/>
            <person name="Okumura S."/>
            <person name="Shinpo S."/>
            <person name="Takeuchi C."/>
            <person name="Wada T."/>
            <person name="Watanabe A."/>
            <person name="Yamada M."/>
            <person name="Yasuda M."/>
            <person name="Sato S."/>
            <person name="de la Bastide M."/>
            <person name="Huang E."/>
            <person name="Spiegel L."/>
            <person name="Gnoj L."/>
            <person name="O'Shaughnessy A."/>
            <person name="Preston R."/>
            <person name="Habermann K."/>
            <person name="Murray J."/>
            <person name="Johnson D."/>
            <person name="Rohlfing T."/>
            <person name="Nelson J."/>
            <person name="Stoneking T."/>
            <person name="Pepin K."/>
            <person name="Spieth J."/>
            <person name="Sekhon M."/>
            <person name="Armstrong J."/>
            <person name="Becker M."/>
            <person name="Belter E."/>
            <person name="Cordum H."/>
            <person name="Cordes M."/>
            <person name="Courtney L."/>
            <person name="Courtney W."/>
            <person name="Dante M."/>
            <person name="Du H."/>
            <person name="Edwards J."/>
            <person name="Fryman J."/>
            <person name="Haakensen B."/>
            <person name="Lamar E."/>
            <person name="Latreille P."/>
            <person name="Leonard S."/>
            <person name="Meyer R."/>
            <person name="Mulvaney E."/>
            <person name="Ozersky P."/>
            <person name="Riley A."/>
            <person name="Strowmatt C."/>
            <person name="Wagner-McPherson C."/>
            <person name="Wollam A."/>
            <person name="Yoakum M."/>
            <person name="Bell M."/>
            <person name="Dedhia N."/>
            <person name="Parnell L."/>
            <person name="Shah R."/>
            <person name="Rodriguez M."/>
            <person name="Hoon See L."/>
            <person name="Vil D."/>
            <person name="Baker J."/>
            <person name="Kirchoff K."/>
            <person name="Toth K."/>
            <person name="King L."/>
            <person name="Bahret A."/>
            <person name="Miller B."/>
            <person name="Marra M.A."/>
            <person name="Martienssen R."/>
            <person name="McCombie W.R."/>
            <person name="Wilson R.K."/>
            <person name="Murphy G."/>
            <person name="Bancroft I."/>
            <person name="Volckaert G."/>
            <person name="Wambutt R."/>
            <person name="Duesterhoeft A."/>
            <person name="Stiekema W."/>
            <person name="Pohl T."/>
            <person name="Entian K.-D."/>
            <person name="Terryn N."/>
            <person name="Hartley N."/>
            <person name="Bent E."/>
            <person name="Johnson S."/>
            <person name="Langham S.-A."/>
            <person name="McCullagh B."/>
            <person name="Robben J."/>
            <person name="Grymonprez B."/>
            <person name="Zimmermann W."/>
            <person name="Ramsperger U."/>
            <person name="Wedler H."/>
            <person name="Balke K."/>
            <person name="Wedler E."/>
            <person name="Peters S."/>
            <person name="van Staveren M."/>
            <person name="Dirkse W."/>
            <person name="Mooijman P."/>
            <person name="Klein Lankhorst R."/>
            <person name="Weitzenegger T."/>
            <person name="Bothe G."/>
            <person name="Rose M."/>
            <person name="Hauf J."/>
            <person name="Berneiser S."/>
            <person name="Hempel S."/>
            <person name="Feldpausch M."/>
            <person name="Lamberth S."/>
            <person name="Villarroel R."/>
            <person name="Gielen J."/>
            <person name="Ardiles W."/>
            <person name="Bents O."/>
            <person name="Lemcke K."/>
            <person name="Kolesov G."/>
            <person name="Mayer K.F.X."/>
            <person name="Rudd S."/>
            <person name="Schoof H."/>
            <person name="Schueller C."/>
            <person name="Zaccaria P."/>
            <person name="Mewes H.-W."/>
            <person name="Bevan M."/>
            <person name="Fransz P.F."/>
        </authorList>
    </citation>
    <scope>NUCLEOTIDE SEQUENCE [LARGE SCALE GENOMIC DNA]</scope>
    <source>
        <strain>cv. Columbia</strain>
    </source>
</reference>
<reference key="2">
    <citation type="journal article" date="2017" name="Plant J.">
        <title>Araport11: a complete reannotation of the Arabidopsis thaliana reference genome.</title>
        <authorList>
            <person name="Cheng C.Y."/>
            <person name="Krishnakumar V."/>
            <person name="Chan A.P."/>
            <person name="Thibaud-Nissen F."/>
            <person name="Schobel S."/>
            <person name="Town C.D."/>
        </authorList>
    </citation>
    <scope>GENOME REANNOTATION</scope>
    <source>
        <strain>cv. Columbia</strain>
    </source>
</reference>
<reference key="3">
    <citation type="journal article" date="2003" name="Science">
        <title>Empirical analysis of transcriptional activity in the Arabidopsis genome.</title>
        <authorList>
            <person name="Yamada K."/>
            <person name="Lim J."/>
            <person name="Dale J.M."/>
            <person name="Chen H."/>
            <person name="Shinn P."/>
            <person name="Palm C.J."/>
            <person name="Southwick A.M."/>
            <person name="Wu H.C."/>
            <person name="Kim C.J."/>
            <person name="Nguyen M."/>
            <person name="Pham P.K."/>
            <person name="Cheuk R.F."/>
            <person name="Karlin-Newmann G."/>
            <person name="Liu S.X."/>
            <person name="Lam B."/>
            <person name="Sakano H."/>
            <person name="Wu T."/>
            <person name="Yu G."/>
            <person name="Miranda M."/>
            <person name="Quach H.L."/>
            <person name="Tripp M."/>
            <person name="Chang C.H."/>
            <person name="Lee J.M."/>
            <person name="Toriumi M.J."/>
            <person name="Chan M.M."/>
            <person name="Tang C.C."/>
            <person name="Onodera C.S."/>
            <person name="Deng J.M."/>
            <person name="Akiyama K."/>
            <person name="Ansari Y."/>
            <person name="Arakawa T."/>
            <person name="Banh J."/>
            <person name="Banno F."/>
            <person name="Bowser L."/>
            <person name="Brooks S.Y."/>
            <person name="Carninci P."/>
            <person name="Chao Q."/>
            <person name="Choy N."/>
            <person name="Enju A."/>
            <person name="Goldsmith A.D."/>
            <person name="Gurjal M."/>
            <person name="Hansen N.F."/>
            <person name="Hayashizaki Y."/>
            <person name="Johnson-Hopson C."/>
            <person name="Hsuan V.W."/>
            <person name="Iida K."/>
            <person name="Karnes M."/>
            <person name="Khan S."/>
            <person name="Koesema E."/>
            <person name="Ishida J."/>
            <person name="Jiang P.X."/>
            <person name="Jones T."/>
            <person name="Kawai J."/>
            <person name="Kamiya A."/>
            <person name="Meyers C."/>
            <person name="Nakajima M."/>
            <person name="Narusaka M."/>
            <person name="Seki M."/>
            <person name="Sakurai T."/>
            <person name="Satou M."/>
            <person name="Tamse R."/>
            <person name="Vaysberg M."/>
            <person name="Wallender E.K."/>
            <person name="Wong C."/>
            <person name="Yamamura Y."/>
            <person name="Yuan S."/>
            <person name="Shinozaki K."/>
            <person name="Davis R.W."/>
            <person name="Theologis A."/>
            <person name="Ecker J.R."/>
        </authorList>
    </citation>
    <scope>NUCLEOTIDE SEQUENCE [LARGE SCALE MRNA]</scope>
    <source>
        <strain>cv. Columbia</strain>
    </source>
</reference>
<reference key="4">
    <citation type="journal article" date="2009" name="J. Proteomics">
        <title>Phosphoproteomic analysis of nuclei-enriched fractions from Arabidopsis thaliana.</title>
        <authorList>
            <person name="Jones A.M.E."/>
            <person name="MacLean D."/>
            <person name="Studholme D.J."/>
            <person name="Serna-Sanz A."/>
            <person name="Andreasson E."/>
            <person name="Rathjen J.P."/>
            <person name="Peck S.C."/>
        </authorList>
    </citation>
    <scope>PHOSPHORYLATION [LARGE SCALE ANALYSIS] AT SER-15</scope>
    <scope>IDENTIFICATION BY MASS SPECTROMETRY [LARGE SCALE ANALYSIS]</scope>
    <source>
        <strain>cv. Columbia</strain>
    </source>
</reference>
<reference key="5">
    <citation type="journal article" date="2009" name="Plant Physiol.">
        <title>Large-scale Arabidopsis phosphoproteome profiling reveals novel chloroplast kinase substrates and phosphorylation networks.</title>
        <authorList>
            <person name="Reiland S."/>
            <person name="Messerli G."/>
            <person name="Baerenfaller K."/>
            <person name="Gerrits B."/>
            <person name="Endler A."/>
            <person name="Grossmann J."/>
            <person name="Gruissem W."/>
            <person name="Baginsky S."/>
        </authorList>
    </citation>
    <scope>PHOSPHORYLATION [LARGE SCALE ANALYSIS] AT SER-15 AND SER-295</scope>
    <scope>IDENTIFICATION BY MASS SPECTROMETRY [LARGE SCALE ANALYSIS]</scope>
</reference>
<reference key="6">
    <citation type="journal article" date="2010" name="Plant Physiol. Biochem.">
        <title>Comparative analysis of Arabidopsis zinc finger-containing glycine-rich RNA-binding proteins during cold adaptation.</title>
        <authorList>
            <person name="Kim W.Y."/>
            <person name="Kim J.Y."/>
            <person name="Jung H.J."/>
            <person name="Oh S.H."/>
            <person name="Han Y.S."/>
            <person name="Kang H."/>
        </authorList>
    </citation>
    <scope>FUNCTION</scope>
    <scope>SUBCELLULAR LOCATION</scope>
    <scope>TISSUE SPECIFICITY</scope>
    <scope>INDUCTION BY COLD</scope>
    <scope>DISRUPTION PHENOTYPE</scope>
</reference>
<proteinExistence type="evidence at protein level"/>
<protein>
    <recommendedName>
        <fullName evidence="6">Glycine-rich RNA-binding protein RZ1C</fullName>
        <shortName evidence="5">AtRZ-1C</shortName>
    </recommendedName>
</protein>
<name>RZ1C_ARATH</name>